<reference key="1">
    <citation type="journal article" date="2007" name="J. Bacteriol.">
        <title>Genome sequence of Avery's virulent serotype 2 strain D39 of Streptococcus pneumoniae and comparison with that of unencapsulated laboratory strain R6.</title>
        <authorList>
            <person name="Lanie J.A."/>
            <person name="Ng W.-L."/>
            <person name="Kazmierczak K.M."/>
            <person name="Andrzejewski T.M."/>
            <person name="Davidsen T.M."/>
            <person name="Wayne K.J."/>
            <person name="Tettelin H."/>
            <person name="Glass J.I."/>
            <person name="Winkler M.E."/>
        </authorList>
    </citation>
    <scope>NUCLEOTIDE SEQUENCE [LARGE SCALE GENOMIC DNA]</scope>
    <source>
        <strain>D39 / NCTC 7466</strain>
    </source>
</reference>
<sequence>MNIQEEIKKRRTFAIISHPDAGKTTITEQLLYFGGEIREAGTVKGKKTGTFAKSDWMDIEKQRGISVTSSVMQFDYDGKRVNILDTPGHEDFSEDTYRTLMAVDAAVMVVDSAKGIEAQTKKLFEVVKHRGIPVFTFMNKLDRDGREPLDLLQELEEILGIASYPMNWPIGMGKAFEGLYDLYNQRLELYKGDERFASLEDGDKLFGSNPFYEQVKDDIELLNEAGNEFSEEAILAGELTPVFFGSALTNFGVQTFLEIFLKFAPEPHGHKKTDGEIVDPYDKDFSGFVFKIQANMDPRHRDRIAFVRIVSGEFERGMSVNLPRTGKGAKLSNVTQFMAESRENVINAVAGDIIGVYDTGTYQVGDTLTVGKNKFEFEPLPTFTPEIFMKVSAKNVMKQKSFHKGIEQLVQEGAVQLYKNYQTGEYMLGAVGQLQFEVFKHRMEGEYNAEVVMSPMGKKTVRWIKPEDLDERMSSSRNILAKDRFDQPVFLFENDFALRWFADKYPDVELEEKM</sequence>
<dbReference type="EMBL" id="CP000410">
    <property type="protein sequence ID" value="ABJ55240.1"/>
    <property type="molecule type" value="Genomic_DNA"/>
</dbReference>
<dbReference type="RefSeq" id="WP_001025419.1">
    <property type="nucleotide sequence ID" value="NZ_JAMLJR010000009.1"/>
</dbReference>
<dbReference type="SMR" id="Q04M39"/>
<dbReference type="PaxDb" id="373153-SPD_0399"/>
<dbReference type="KEGG" id="spd:SPD_0399"/>
<dbReference type="eggNOG" id="COG4108">
    <property type="taxonomic scope" value="Bacteria"/>
</dbReference>
<dbReference type="HOGENOM" id="CLU_002794_2_1_9"/>
<dbReference type="BioCyc" id="SPNE373153:G1G6V-438-MONOMER"/>
<dbReference type="Proteomes" id="UP000001452">
    <property type="component" value="Chromosome"/>
</dbReference>
<dbReference type="GO" id="GO:0005829">
    <property type="term" value="C:cytosol"/>
    <property type="evidence" value="ECO:0007669"/>
    <property type="project" value="TreeGrafter"/>
</dbReference>
<dbReference type="GO" id="GO:0005525">
    <property type="term" value="F:GTP binding"/>
    <property type="evidence" value="ECO:0007669"/>
    <property type="project" value="UniProtKB-UniRule"/>
</dbReference>
<dbReference type="GO" id="GO:0003924">
    <property type="term" value="F:GTPase activity"/>
    <property type="evidence" value="ECO:0007669"/>
    <property type="project" value="InterPro"/>
</dbReference>
<dbReference type="GO" id="GO:0016150">
    <property type="term" value="F:translation release factor activity, codon nonspecific"/>
    <property type="evidence" value="ECO:0007669"/>
    <property type="project" value="TreeGrafter"/>
</dbReference>
<dbReference type="GO" id="GO:0016149">
    <property type="term" value="F:translation release factor activity, codon specific"/>
    <property type="evidence" value="ECO:0007669"/>
    <property type="project" value="UniProtKB-UniRule"/>
</dbReference>
<dbReference type="GO" id="GO:0006449">
    <property type="term" value="P:regulation of translational termination"/>
    <property type="evidence" value="ECO:0007669"/>
    <property type="project" value="UniProtKB-UniRule"/>
</dbReference>
<dbReference type="CDD" id="cd04169">
    <property type="entry name" value="RF3"/>
    <property type="match status" value="1"/>
</dbReference>
<dbReference type="CDD" id="cd16259">
    <property type="entry name" value="RF3_III"/>
    <property type="match status" value="1"/>
</dbReference>
<dbReference type="FunFam" id="2.40.30.10:FF:000040">
    <property type="entry name" value="Peptide chain release factor 3"/>
    <property type="match status" value="1"/>
</dbReference>
<dbReference type="FunFam" id="3.30.70.3280:FF:000001">
    <property type="entry name" value="Peptide chain release factor 3"/>
    <property type="match status" value="1"/>
</dbReference>
<dbReference type="FunFam" id="3.40.50.300:FF:000542">
    <property type="entry name" value="Peptide chain release factor 3"/>
    <property type="match status" value="1"/>
</dbReference>
<dbReference type="Gene3D" id="3.40.50.300">
    <property type="entry name" value="P-loop containing nucleotide triphosphate hydrolases"/>
    <property type="match status" value="1"/>
</dbReference>
<dbReference type="Gene3D" id="3.30.70.3280">
    <property type="entry name" value="Peptide chain release factor 3, domain III"/>
    <property type="match status" value="1"/>
</dbReference>
<dbReference type="Gene3D" id="2.40.30.10">
    <property type="entry name" value="Translation factors"/>
    <property type="match status" value="1"/>
</dbReference>
<dbReference type="HAMAP" id="MF_00072">
    <property type="entry name" value="Rel_fac_3"/>
    <property type="match status" value="1"/>
</dbReference>
<dbReference type="InterPro" id="IPR053905">
    <property type="entry name" value="EF-G-like_DII"/>
</dbReference>
<dbReference type="InterPro" id="IPR035647">
    <property type="entry name" value="EFG_III/V"/>
</dbReference>
<dbReference type="InterPro" id="IPR031157">
    <property type="entry name" value="G_TR_CS"/>
</dbReference>
<dbReference type="InterPro" id="IPR027417">
    <property type="entry name" value="P-loop_NTPase"/>
</dbReference>
<dbReference type="InterPro" id="IPR004548">
    <property type="entry name" value="PrfC"/>
</dbReference>
<dbReference type="InterPro" id="IPR032090">
    <property type="entry name" value="RF3_C"/>
</dbReference>
<dbReference type="InterPro" id="IPR038467">
    <property type="entry name" value="RF3_dom_3_sf"/>
</dbReference>
<dbReference type="InterPro" id="IPR041732">
    <property type="entry name" value="RF3_GTP-bd"/>
</dbReference>
<dbReference type="InterPro" id="IPR005225">
    <property type="entry name" value="Small_GTP-bd"/>
</dbReference>
<dbReference type="InterPro" id="IPR000795">
    <property type="entry name" value="T_Tr_GTP-bd_dom"/>
</dbReference>
<dbReference type="InterPro" id="IPR009000">
    <property type="entry name" value="Transl_B-barrel_sf"/>
</dbReference>
<dbReference type="NCBIfam" id="TIGR00503">
    <property type="entry name" value="prfC"/>
    <property type="match status" value="1"/>
</dbReference>
<dbReference type="NCBIfam" id="NF001964">
    <property type="entry name" value="PRK00741.1"/>
    <property type="match status" value="1"/>
</dbReference>
<dbReference type="NCBIfam" id="TIGR00231">
    <property type="entry name" value="small_GTP"/>
    <property type="match status" value="1"/>
</dbReference>
<dbReference type="PANTHER" id="PTHR43556">
    <property type="entry name" value="PEPTIDE CHAIN RELEASE FACTOR RF3"/>
    <property type="match status" value="1"/>
</dbReference>
<dbReference type="PANTHER" id="PTHR43556:SF2">
    <property type="entry name" value="PEPTIDE CHAIN RELEASE FACTOR RF3"/>
    <property type="match status" value="1"/>
</dbReference>
<dbReference type="Pfam" id="PF22042">
    <property type="entry name" value="EF-G_D2"/>
    <property type="match status" value="1"/>
</dbReference>
<dbReference type="Pfam" id="PF00009">
    <property type="entry name" value="GTP_EFTU"/>
    <property type="match status" value="1"/>
</dbReference>
<dbReference type="Pfam" id="PF16658">
    <property type="entry name" value="RF3_C"/>
    <property type="match status" value="1"/>
</dbReference>
<dbReference type="PRINTS" id="PR00315">
    <property type="entry name" value="ELONGATNFCT"/>
</dbReference>
<dbReference type="PRINTS" id="PR01037">
    <property type="entry name" value="TCRTETOQM"/>
</dbReference>
<dbReference type="SUPFAM" id="SSF54980">
    <property type="entry name" value="EF-G C-terminal domain-like"/>
    <property type="match status" value="1"/>
</dbReference>
<dbReference type="SUPFAM" id="SSF52540">
    <property type="entry name" value="P-loop containing nucleoside triphosphate hydrolases"/>
    <property type="match status" value="1"/>
</dbReference>
<dbReference type="SUPFAM" id="SSF50447">
    <property type="entry name" value="Translation proteins"/>
    <property type="match status" value="1"/>
</dbReference>
<dbReference type="PROSITE" id="PS00301">
    <property type="entry name" value="G_TR_1"/>
    <property type="match status" value="1"/>
</dbReference>
<dbReference type="PROSITE" id="PS51722">
    <property type="entry name" value="G_TR_2"/>
    <property type="match status" value="1"/>
</dbReference>
<gene>
    <name evidence="1" type="primary">prfC</name>
    <name type="ordered locus">SPD_0399</name>
</gene>
<organism>
    <name type="scientific">Streptococcus pneumoniae serotype 2 (strain D39 / NCTC 7466)</name>
    <dbReference type="NCBI Taxonomy" id="373153"/>
    <lineage>
        <taxon>Bacteria</taxon>
        <taxon>Bacillati</taxon>
        <taxon>Bacillota</taxon>
        <taxon>Bacilli</taxon>
        <taxon>Lactobacillales</taxon>
        <taxon>Streptococcaceae</taxon>
        <taxon>Streptococcus</taxon>
    </lineage>
</organism>
<comment type="function">
    <text evidence="1">Increases the formation of ribosomal termination complexes and stimulates activities of RF-1 and RF-2. It binds guanine nucleotides and has strong preference for UGA stop codons. It may interact directly with the ribosome. The stimulation of RF-1 and RF-2 is significantly reduced by GTP and GDP, but not by GMP.</text>
</comment>
<comment type="subcellular location">
    <subcellularLocation>
        <location evidence="1">Cytoplasm</location>
    </subcellularLocation>
</comment>
<comment type="similarity">
    <text evidence="1">Belongs to the TRAFAC class translation factor GTPase superfamily. Classic translation factor GTPase family. PrfC subfamily.</text>
</comment>
<feature type="chain" id="PRO_1000023684" description="Peptide chain release factor 3">
    <location>
        <begin position="1"/>
        <end position="514"/>
    </location>
</feature>
<feature type="domain" description="tr-type G">
    <location>
        <begin position="8"/>
        <end position="268"/>
    </location>
</feature>
<feature type="binding site" evidence="1">
    <location>
        <begin position="17"/>
        <end position="24"/>
    </location>
    <ligand>
        <name>GTP</name>
        <dbReference type="ChEBI" id="CHEBI:37565"/>
    </ligand>
</feature>
<feature type="binding site" evidence="1">
    <location>
        <begin position="85"/>
        <end position="89"/>
    </location>
    <ligand>
        <name>GTP</name>
        <dbReference type="ChEBI" id="CHEBI:37565"/>
    </ligand>
</feature>
<feature type="binding site" evidence="1">
    <location>
        <begin position="139"/>
        <end position="142"/>
    </location>
    <ligand>
        <name>GTP</name>
        <dbReference type="ChEBI" id="CHEBI:37565"/>
    </ligand>
</feature>
<keyword id="KW-0963">Cytoplasm</keyword>
<keyword id="KW-0342">GTP-binding</keyword>
<keyword id="KW-0547">Nucleotide-binding</keyword>
<keyword id="KW-0648">Protein biosynthesis</keyword>
<keyword id="KW-1185">Reference proteome</keyword>
<proteinExistence type="inferred from homology"/>
<accession>Q04M39</accession>
<name>RF3_STRP2</name>
<protein>
    <recommendedName>
        <fullName evidence="1">Peptide chain release factor 3</fullName>
        <shortName evidence="1">RF-3</shortName>
    </recommendedName>
</protein>
<evidence type="ECO:0000255" key="1">
    <source>
        <dbReference type="HAMAP-Rule" id="MF_00072"/>
    </source>
</evidence>